<proteinExistence type="evidence at protein level"/>
<accession>P05708</accession>
<reference key="1">
    <citation type="journal article" date="1989" name="Proc. Natl. Acad. Sci. U.S.A.">
        <title>Complete amino acid sequence of rat brain hexokinase, deduced from the cloned cDNA, and proposed structure of a mammalian hexokinase.</title>
        <authorList>
            <person name="Schwab D.A."/>
            <person name="Wilson J.E."/>
        </authorList>
    </citation>
    <scope>NUCLEOTIDE SEQUENCE [MRNA] OF 1-466</scope>
    <source>
        <tissue>Brain</tissue>
    </source>
</reference>
<reference key="2">
    <citation type="journal article" date="1988" name="J. Biol. Chem.">
        <title>The complete amino acid sequence of the catalytic domain of rat brain hexokinase, deduced from the cloned cDNA.</title>
        <authorList>
            <person name="Schwab D.A."/>
            <person name="Wilson J.E."/>
        </authorList>
    </citation>
    <scope>NUCLEOTIDE SEQUENCE [GENOMIC DNA] OF 467-918</scope>
    <source>
        <tissue>Brain</tissue>
    </source>
</reference>
<reference key="3">
    <citation type="submission" date="1998-06" db="EMBL/GenBank/DDBJ databases">
        <authorList>
            <person name="Wilson J.E."/>
        </authorList>
    </citation>
    <scope>SEQUENCE REVISION</scope>
</reference>
<reference key="4">
    <citation type="journal article" date="1987" name="Arch. Biochem. Biophys.">
        <title>Rat brain hexokinase: amino acid sequence at the substrate hexose binding site is homologous to that of yeast hexokinase.</title>
        <authorList>
            <person name="Schirch D.M."/>
            <person name="Wilson J.E."/>
        </authorList>
    </citation>
    <scope>PROTEIN SEQUENCE OF 597-617; 625-636 AND 802-816</scope>
    <source>
        <tissue>Brain</tissue>
    </source>
</reference>
<reference key="5">
    <citation type="submission" date="1995-12" db="EMBL/GenBank/DDBJ databases">
        <authorList>
            <person name="White J.A."/>
            <person name="Liu W."/>
            <person name="Wilson J.E."/>
        </authorList>
    </citation>
    <scope>NUCLEOTIDE SEQUENCE [GENOMIC DNA] OF 1-21</scope>
    <source>
        <strain>Sprague-Dawley</strain>
        <tissue>Liver</tissue>
    </source>
</reference>
<reference key="6">
    <citation type="submission" date="1997-10" db="EMBL/GenBank/DDBJ databases">
        <authorList>
            <person name="White J.A."/>
            <person name="Wilson J.E."/>
        </authorList>
    </citation>
    <scope>NUCLEOTIDE SEQUENCE [GENOMIC DNA] OF 221-246 AND 631-668</scope>
</reference>
<reference key="7">
    <citation type="journal article" date="1954" name="J. Biol. Chem.">
        <title>Substrate specificity of brain hexokinase.</title>
        <authorList>
            <person name="Sols A."/>
            <person name="Crane R.K."/>
        </authorList>
    </citation>
    <scope>FUNCTION</scope>
    <scope>CATALYTIC ACTIVITY</scope>
</reference>
<reference key="8">
    <citation type="journal article" date="1964" name="Biochem. Biophys. Res. Commun.">
        <title>Multiple molecular forms of ATP:hexose 6-phosphotransferase from rat liver.</title>
        <authorList>
            <person name="Gonzalez C."/>
            <person name="Ureta T."/>
            <person name="Sanchez R."/>
            <person name="Niemeyer H."/>
        </authorList>
    </citation>
    <scope>FUNCTION</scope>
    <scope>CATALYTIC ACTIVITY</scope>
    <scope>BIOPHYSICOCHEMICAL PROPERTIES</scope>
</reference>
<reference key="9">
    <citation type="journal article" date="1982" name="Comp. Biochem. Physiol.">
        <title>The comparative isozymology of vertebrate hexokinases.</title>
        <authorList>
            <person name="Ureta T."/>
        </authorList>
    </citation>
    <scope>REVIEW</scope>
</reference>
<reference key="10">
    <citation type="journal article" date="1987" name="Arch. Biochem. Biophys.">
        <title>Rat brain hexokinase: location of the substrate hexose binding site in a structural domain at the C-terminus of the enzyme.</title>
        <authorList>
            <person name="Schirch D.M."/>
            <person name="Wilson J.E."/>
        </authorList>
    </citation>
    <scope>FUNCTION</scope>
    <scope>CATALYTIC ACTIVITY</scope>
</reference>
<reference key="11">
    <citation type="journal article" date="2009" name="Reproduction">
        <title>Identification of novel immunodominant epididymal sperm proteins using combinatorial approach.</title>
        <authorList>
            <person name="Khan S.A."/>
            <person name="Suryawanshi A.R."/>
            <person name="Ranpura S.A."/>
            <person name="Jadhav S.V."/>
            <person name="Khole V.V."/>
        </authorList>
    </citation>
    <scope>IDENTIFICATION BY MASS SPECTROMETRY</scope>
    <scope>TISSUE SPECIFICITY</scope>
</reference>
<reference key="12">
    <citation type="journal article" date="2012" name="Nat. Commun.">
        <title>Quantitative maps of protein phosphorylation sites across 14 different rat organs and tissues.</title>
        <authorList>
            <person name="Lundby A."/>
            <person name="Secher A."/>
            <person name="Lage K."/>
            <person name="Nordsborg N.B."/>
            <person name="Dmytriyev A."/>
            <person name="Lundby C."/>
            <person name="Olsen J.V."/>
        </authorList>
    </citation>
    <scope>PHOSPHORYLATION [LARGE SCALE ANALYSIS] AT SER-337</scope>
    <scope>IDENTIFICATION BY MASS SPECTROMETRY [LARGE SCALE ANALYSIS]</scope>
</reference>
<reference key="13">
    <citation type="journal article" date="1998" name="Nat. Struct. Biol.">
        <title>The structure of mammalian hexokinase-1.</title>
        <authorList>
            <person name="Mulichak A.M."/>
            <person name="Wilson J.E."/>
            <person name="Padmanabhan K."/>
            <person name="Garavito R.M."/>
        </authorList>
    </citation>
    <scope>X-RAY CRYSTALLOGRAPHY (2.8 ANGSTROMS) IN COMPLEX WITH GLUCOSE AND GLUCOSE-6-PHOSPHATE</scope>
</reference>
<name>HXK1_RAT</name>
<organism>
    <name type="scientific">Rattus norvegicus</name>
    <name type="common">Rat</name>
    <dbReference type="NCBI Taxonomy" id="10116"/>
    <lineage>
        <taxon>Eukaryota</taxon>
        <taxon>Metazoa</taxon>
        <taxon>Chordata</taxon>
        <taxon>Craniata</taxon>
        <taxon>Vertebrata</taxon>
        <taxon>Euteleostomi</taxon>
        <taxon>Mammalia</taxon>
        <taxon>Eutheria</taxon>
        <taxon>Euarchontoglires</taxon>
        <taxon>Glires</taxon>
        <taxon>Rodentia</taxon>
        <taxon>Myomorpha</taxon>
        <taxon>Muroidea</taxon>
        <taxon>Muridae</taxon>
        <taxon>Murinae</taxon>
        <taxon>Rattus</taxon>
    </lineage>
</organism>
<feature type="chain" id="PRO_0000197586" description="Hexokinase-1">
    <location>
        <begin position="1"/>
        <end position="918"/>
    </location>
</feature>
<feature type="domain" description="Hexokinase 1" evidence="3">
    <location>
        <begin position="16"/>
        <end position="458"/>
    </location>
</feature>
<feature type="domain" description="Hexokinase 2" evidence="3">
    <location>
        <begin position="464"/>
        <end position="906"/>
    </location>
</feature>
<feature type="region of interest" description="Mitochondrial-binding peptide (MBP)" evidence="2">
    <location>
        <begin position="1"/>
        <end position="10"/>
    </location>
</feature>
<feature type="region of interest" description="Hexokinase small subdomain 1" evidence="3">
    <location>
        <begin position="73"/>
        <end position="207"/>
    </location>
</feature>
<feature type="region of interest" description="Hexokinase large subdomain 1" evidence="3">
    <location>
        <begin position="208"/>
        <end position="447"/>
    </location>
</feature>
<feature type="region of interest" description="Hexokinase small subdomain 2" evidence="3">
    <location>
        <begin position="521"/>
        <end position="655"/>
    </location>
</feature>
<feature type="region of interest" description="Hexokinase large subdomain 2" evidence="3">
    <location>
        <begin position="656"/>
        <end position="895"/>
    </location>
</feature>
<feature type="binding site" evidence="2">
    <location>
        <position position="30"/>
    </location>
    <ligand>
        <name>ATP</name>
        <dbReference type="ChEBI" id="CHEBI:30616"/>
        <label>1</label>
    </ligand>
</feature>
<feature type="binding site" evidence="2">
    <location>
        <begin position="84"/>
        <end position="89"/>
    </location>
    <ligand>
        <name>ATP</name>
        <dbReference type="ChEBI" id="CHEBI:30616"/>
        <label>1</label>
    </ligand>
</feature>
<feature type="binding site" evidence="8 15">
    <location>
        <begin position="84"/>
        <end position="88"/>
    </location>
    <ligand>
        <name>D-glucose 6-phosphate</name>
        <dbReference type="ChEBI" id="CHEBI:61548"/>
        <label>1</label>
    </ligand>
</feature>
<feature type="binding site" evidence="8 15">
    <location>
        <position position="155"/>
    </location>
    <ligand>
        <name>D-glucose</name>
        <dbReference type="ChEBI" id="CHEBI:4167"/>
        <label>1</label>
    </ligand>
</feature>
<feature type="binding site" evidence="8 15">
    <location>
        <begin position="172"/>
        <end position="173"/>
    </location>
    <ligand>
        <name>D-glucose</name>
        <dbReference type="ChEBI" id="CHEBI:4167"/>
        <label>1</label>
    </ligand>
</feature>
<feature type="binding site" evidence="8 15">
    <location>
        <begin position="208"/>
        <end position="209"/>
    </location>
    <ligand>
        <name>D-glucose</name>
        <dbReference type="ChEBI" id="CHEBI:4167"/>
        <label>1</label>
    </ligand>
</feature>
<feature type="binding site" evidence="8 15">
    <location>
        <position position="209"/>
    </location>
    <ligand>
        <name>D-glucose 6-phosphate</name>
        <dbReference type="ChEBI" id="CHEBI:61548"/>
        <label>1</label>
    </ligand>
</feature>
<feature type="binding site" evidence="8 15">
    <location>
        <position position="232"/>
    </location>
    <ligand>
        <name>D-glucose 6-phosphate</name>
        <dbReference type="ChEBI" id="CHEBI:61548"/>
        <label>1</label>
    </ligand>
</feature>
<feature type="binding site" evidence="8 15">
    <location>
        <position position="235"/>
    </location>
    <ligand>
        <name>D-glucose</name>
        <dbReference type="ChEBI" id="CHEBI:4167"/>
        <label>1</label>
    </ligand>
</feature>
<feature type="binding site" evidence="8 15">
    <location>
        <position position="260"/>
    </location>
    <ligand>
        <name>D-glucose</name>
        <dbReference type="ChEBI" id="CHEBI:4167"/>
        <label>1</label>
    </ligand>
</feature>
<feature type="binding site" evidence="8 15">
    <location>
        <begin position="291"/>
        <end position="294"/>
    </location>
    <ligand>
        <name>D-glucose</name>
        <dbReference type="ChEBI" id="CHEBI:4167"/>
        <label>1</label>
    </ligand>
</feature>
<feature type="binding site" evidence="8 15">
    <location>
        <begin position="413"/>
        <end position="415"/>
    </location>
    <ligand>
        <name>D-glucose 6-phosphate</name>
        <dbReference type="ChEBI" id="CHEBI:61548"/>
        <label>1</label>
    </ligand>
</feature>
<feature type="binding site" evidence="2">
    <location>
        <begin position="425"/>
        <end position="426"/>
    </location>
    <ligand>
        <name>ATP</name>
        <dbReference type="ChEBI" id="CHEBI:30616"/>
        <label>1</label>
    </ligand>
</feature>
<feature type="binding site" evidence="8 15">
    <location>
        <position position="449"/>
    </location>
    <ligand>
        <name>D-glucose 6-phosphate</name>
        <dbReference type="ChEBI" id="CHEBI:61548"/>
        <label>1</label>
    </ligand>
</feature>
<feature type="binding site" evidence="2">
    <location>
        <begin position="532"/>
        <end position="537"/>
    </location>
    <ligand>
        <name>ATP</name>
        <dbReference type="ChEBI" id="CHEBI:30616"/>
        <label>2</label>
    </ligand>
</feature>
<feature type="binding site" evidence="8 15">
    <location>
        <begin position="532"/>
        <end position="536"/>
    </location>
    <ligand>
        <name>D-glucose 6-phosphate</name>
        <dbReference type="ChEBI" id="CHEBI:61548"/>
        <label>2</label>
    </ligand>
</feature>
<feature type="binding site" evidence="8 15">
    <location>
        <position position="603"/>
    </location>
    <ligand>
        <name>D-glucose 6-phosphate</name>
        <dbReference type="ChEBI" id="CHEBI:61548"/>
        <label>2</label>
    </ligand>
</feature>
<feature type="binding site" evidence="8 15">
    <location>
        <begin position="620"/>
        <end position="621"/>
    </location>
    <ligand>
        <name>D-glucose</name>
        <dbReference type="ChEBI" id="CHEBI:4167"/>
        <label>2</label>
    </ligand>
</feature>
<feature type="binding site" evidence="8 15">
    <location>
        <begin position="656"/>
        <end position="657"/>
    </location>
    <ligand>
        <name>D-glucose</name>
        <dbReference type="ChEBI" id="CHEBI:4167"/>
        <label>2</label>
    </ligand>
</feature>
<feature type="binding site" evidence="8 15">
    <location>
        <position position="657"/>
    </location>
    <ligand>
        <name>D-glucose 6-phosphate</name>
        <dbReference type="ChEBI" id="CHEBI:61548"/>
        <label>2</label>
    </ligand>
</feature>
<feature type="binding site" evidence="2">
    <location>
        <position position="680"/>
    </location>
    <ligand>
        <name>ATP</name>
        <dbReference type="ChEBI" id="CHEBI:30616"/>
        <label>2</label>
    </ligand>
</feature>
<feature type="binding site" evidence="8 15">
    <location>
        <position position="680"/>
    </location>
    <ligand>
        <name>D-glucose 6-phosphate</name>
        <dbReference type="ChEBI" id="CHEBI:61548"/>
        <label>2</label>
    </ligand>
</feature>
<feature type="binding site" evidence="8 15">
    <location>
        <position position="683"/>
    </location>
    <ligand>
        <name>D-glucose</name>
        <dbReference type="ChEBI" id="CHEBI:4167"/>
        <label>2</label>
    </ligand>
</feature>
<feature type="binding site" evidence="8 15">
    <location>
        <position position="708"/>
    </location>
    <ligand>
        <name>D-glucose</name>
        <dbReference type="ChEBI" id="CHEBI:4167"/>
        <label>2</label>
    </ligand>
</feature>
<feature type="binding site" evidence="8 15">
    <location>
        <position position="742"/>
    </location>
    <ligand>
        <name>D-glucose</name>
        <dbReference type="ChEBI" id="CHEBI:4167"/>
        <label>2</label>
    </ligand>
</feature>
<feature type="binding site" evidence="2">
    <location>
        <begin position="747"/>
        <end position="748"/>
    </location>
    <ligand>
        <name>ATP</name>
        <dbReference type="ChEBI" id="CHEBI:30616"/>
        <label>2</label>
    </ligand>
</feature>
<feature type="binding site" evidence="2">
    <location>
        <begin position="784"/>
        <end position="788"/>
    </location>
    <ligand>
        <name>ATP</name>
        <dbReference type="ChEBI" id="CHEBI:30616"/>
        <label>2</label>
    </ligand>
</feature>
<feature type="binding site" evidence="8 15">
    <location>
        <begin position="861"/>
        <end position="863"/>
    </location>
    <ligand>
        <name>D-glucose 6-phosphate</name>
        <dbReference type="ChEBI" id="CHEBI:61548"/>
        <label>2</label>
    </ligand>
</feature>
<feature type="binding site" evidence="2">
    <location>
        <begin position="863"/>
        <end position="867"/>
    </location>
    <ligand>
        <name>ATP</name>
        <dbReference type="ChEBI" id="CHEBI:30616"/>
        <label>2</label>
    </ligand>
</feature>
<feature type="binding site" evidence="8 15">
    <location>
        <position position="897"/>
    </location>
    <ligand>
        <name>D-glucose 6-phosphate</name>
        <dbReference type="ChEBI" id="CHEBI:61548"/>
        <label>2</label>
    </ligand>
</feature>
<feature type="modified residue" description="N-acetylmethionine" evidence="2">
    <location>
        <position position="1"/>
    </location>
</feature>
<feature type="modified residue" description="Phosphoserine" evidence="16">
    <location>
        <position position="337"/>
    </location>
</feature>
<feature type="helix" evidence="17">
    <location>
        <begin position="2"/>
        <end position="25"/>
    </location>
</feature>
<feature type="helix" evidence="17">
    <location>
        <begin position="27"/>
        <end position="29"/>
    </location>
</feature>
<feature type="helix" evidence="17">
    <location>
        <begin position="33"/>
        <end position="51"/>
    </location>
</feature>
<feature type="turn" evidence="17">
    <location>
        <begin position="53"/>
        <end position="55"/>
    </location>
</feature>
<feature type="helix" evidence="17">
    <location>
        <begin position="56"/>
        <end position="58"/>
    </location>
</feature>
<feature type="strand" evidence="17">
    <location>
        <begin position="78"/>
        <end position="97"/>
    </location>
</feature>
<feature type="strand" evidence="17">
    <location>
        <begin position="106"/>
        <end position="108"/>
    </location>
</feature>
<feature type="helix" evidence="17">
    <location>
        <begin position="123"/>
        <end position="140"/>
    </location>
</feature>
<feature type="strand" evidence="17">
    <location>
        <begin position="144"/>
        <end position="146"/>
    </location>
</feature>
<feature type="strand" evidence="17">
    <location>
        <begin position="149"/>
        <end position="154"/>
    </location>
</feature>
<feature type="helix" evidence="17">
    <location>
        <begin position="185"/>
        <end position="196"/>
    </location>
</feature>
<feature type="strand" evidence="17">
    <location>
        <begin position="202"/>
        <end position="207"/>
    </location>
</feature>
<feature type="helix" evidence="17">
    <location>
        <begin position="209"/>
        <end position="220"/>
    </location>
</feature>
<feature type="strand" evidence="17">
    <location>
        <begin position="224"/>
        <end position="241"/>
    </location>
</feature>
<feature type="helix" evidence="17">
    <location>
        <begin position="242"/>
        <end position="244"/>
    </location>
</feature>
<feature type="strand" evidence="17">
    <location>
        <begin position="252"/>
        <end position="258"/>
    </location>
</feature>
<feature type="helix" evidence="17">
    <location>
        <begin position="261"/>
        <end position="263"/>
    </location>
</feature>
<feature type="turn" evidence="17">
    <location>
        <begin position="264"/>
        <end position="273"/>
    </location>
</feature>
<feature type="helix" evidence="17">
    <location>
        <begin position="276"/>
        <end position="283"/>
    </location>
</feature>
<feature type="strand" evidence="17">
    <location>
        <begin position="285"/>
        <end position="287"/>
    </location>
</feature>
<feature type="helix" evidence="17">
    <location>
        <begin position="294"/>
        <end position="297"/>
    </location>
</feature>
<feature type="turn" evidence="17">
    <location>
        <begin position="299"/>
        <end position="301"/>
    </location>
</feature>
<feature type="helix" evidence="17">
    <location>
        <begin position="302"/>
        <end position="315"/>
    </location>
</feature>
<feature type="helix" evidence="17">
    <location>
        <begin position="320"/>
        <end position="322"/>
    </location>
</feature>
<feature type="helix" evidence="17">
    <location>
        <begin position="326"/>
        <end position="329"/>
    </location>
</feature>
<feature type="helix" evidence="17">
    <location>
        <begin position="336"/>
        <end position="342"/>
    </location>
</feature>
<feature type="turn" evidence="17">
    <location>
        <begin position="345"/>
        <end position="347"/>
    </location>
</feature>
<feature type="helix" evidence="17">
    <location>
        <begin position="348"/>
        <end position="358"/>
    </location>
</feature>
<feature type="helix" evidence="17">
    <location>
        <begin position="365"/>
        <end position="401"/>
    </location>
</feature>
<feature type="strand" evidence="17">
    <location>
        <begin position="404"/>
        <end position="406"/>
    </location>
</feature>
<feature type="strand" evidence="17">
    <location>
        <begin position="409"/>
        <end position="413"/>
    </location>
</feature>
<feature type="helix" evidence="17">
    <location>
        <begin position="415"/>
        <end position="419"/>
    </location>
</feature>
<feature type="helix" evidence="17">
    <location>
        <begin position="423"/>
        <end position="434"/>
    </location>
</feature>
<feature type="strand" evidence="17">
    <location>
        <begin position="441"/>
        <end position="444"/>
    </location>
</feature>
<feature type="helix" evidence="17">
    <location>
        <begin position="450"/>
        <end position="474"/>
    </location>
</feature>
<feature type="helix" evidence="17">
    <location>
        <begin position="475"/>
        <end position="477"/>
    </location>
</feature>
<feature type="helix" evidence="17">
    <location>
        <begin position="481"/>
        <end position="499"/>
    </location>
</feature>
<feature type="turn" evidence="17">
    <location>
        <begin position="501"/>
        <end position="503"/>
    </location>
</feature>
<feature type="helix" evidence="17">
    <location>
        <begin position="504"/>
        <end position="506"/>
    </location>
</feature>
<feature type="strand" evidence="17">
    <location>
        <begin position="511"/>
        <end position="513"/>
    </location>
</feature>
<feature type="strand" evidence="17">
    <location>
        <begin position="526"/>
        <end position="537"/>
    </location>
</feature>
<feature type="strand" evidence="17">
    <location>
        <begin position="539"/>
        <end position="545"/>
    </location>
</feature>
<feature type="strand" evidence="17">
    <location>
        <begin position="548"/>
        <end position="550"/>
    </location>
</feature>
<feature type="strand" evidence="17">
    <location>
        <begin position="553"/>
        <end position="559"/>
    </location>
</feature>
<feature type="helix" evidence="17">
    <location>
        <begin position="564"/>
        <end position="567"/>
    </location>
</feature>
<feature type="helix" evidence="17">
    <location>
        <begin position="571"/>
        <end position="589"/>
    </location>
</feature>
<feature type="strand" evidence="17">
    <location>
        <begin position="596"/>
        <end position="602"/>
    </location>
</feature>
<feature type="helix" evidence="17">
    <location>
        <begin position="633"/>
        <end position="644"/>
    </location>
</feature>
<feature type="strand" evidence="17">
    <location>
        <begin position="649"/>
        <end position="655"/>
    </location>
</feature>
<feature type="helix" evidence="17">
    <location>
        <begin position="657"/>
        <end position="666"/>
    </location>
</feature>
<feature type="strand" evidence="17">
    <location>
        <begin position="672"/>
        <end position="689"/>
    </location>
</feature>
<feature type="helix" evidence="17">
    <location>
        <begin position="690"/>
        <end position="692"/>
    </location>
</feature>
<feature type="strand" evidence="17">
    <location>
        <begin position="700"/>
        <end position="707"/>
    </location>
</feature>
<feature type="helix" evidence="17">
    <location>
        <begin position="709"/>
        <end position="711"/>
    </location>
</feature>
<feature type="strand" evidence="17">
    <location>
        <begin position="714"/>
        <end position="716"/>
    </location>
</feature>
<feature type="turn" evidence="17">
    <location>
        <begin position="717"/>
        <end position="721"/>
    </location>
</feature>
<feature type="helix" evidence="17">
    <location>
        <begin position="724"/>
        <end position="731"/>
    </location>
</feature>
<feature type="strand" evidence="17">
    <location>
        <begin position="733"/>
        <end position="735"/>
    </location>
</feature>
<feature type="helix" evidence="17">
    <location>
        <begin position="740"/>
        <end position="743"/>
    </location>
</feature>
<feature type="turn" evidence="17">
    <location>
        <begin position="747"/>
        <end position="749"/>
    </location>
</feature>
<feature type="helix" evidence="17">
    <location>
        <begin position="750"/>
        <end position="763"/>
    </location>
</feature>
<feature type="helix" evidence="17">
    <location>
        <begin position="768"/>
        <end position="770"/>
    </location>
</feature>
<feature type="helix" evidence="17">
    <location>
        <begin position="774"/>
        <end position="777"/>
    </location>
</feature>
<feature type="helix" evidence="17">
    <location>
        <begin position="784"/>
        <end position="790"/>
    </location>
</feature>
<feature type="strand" evidence="17">
    <location>
        <begin position="793"/>
        <end position="795"/>
    </location>
</feature>
<feature type="helix" evidence="17">
    <location>
        <begin position="797"/>
        <end position="806"/>
    </location>
</feature>
<feature type="helix" evidence="17">
    <location>
        <begin position="813"/>
        <end position="848"/>
    </location>
</feature>
<feature type="strand" evidence="17">
    <location>
        <begin position="857"/>
        <end position="861"/>
    </location>
</feature>
<feature type="helix" evidence="17">
    <location>
        <begin position="863"/>
        <end position="867"/>
    </location>
</feature>
<feature type="helix" evidence="17">
    <location>
        <begin position="871"/>
        <end position="882"/>
    </location>
</feature>
<feature type="strand" evidence="17">
    <location>
        <begin position="889"/>
        <end position="892"/>
    </location>
</feature>
<feature type="helix" evidence="17">
    <location>
        <begin position="896"/>
        <end position="909"/>
    </location>
</feature>
<evidence type="ECO:0000250" key="1">
    <source>
        <dbReference type="UniProtKB" id="P17710"/>
    </source>
</evidence>
<evidence type="ECO:0000250" key="2">
    <source>
        <dbReference type="UniProtKB" id="P19367"/>
    </source>
</evidence>
<evidence type="ECO:0000255" key="3">
    <source>
        <dbReference type="PROSITE-ProRule" id="PRU01084"/>
    </source>
</evidence>
<evidence type="ECO:0000269" key="4">
    <source>
    </source>
</evidence>
<evidence type="ECO:0000269" key="5">
    <source>
    </source>
</evidence>
<evidence type="ECO:0000269" key="6">
    <source>
    </source>
</evidence>
<evidence type="ECO:0000269" key="7">
    <source>
    </source>
</evidence>
<evidence type="ECO:0000269" key="8">
    <source>
    </source>
</evidence>
<evidence type="ECO:0000303" key="9">
    <source>
    </source>
</evidence>
<evidence type="ECO:0000303" key="10">
    <source>
    </source>
</evidence>
<evidence type="ECO:0000303" key="11">
    <source>
    </source>
</evidence>
<evidence type="ECO:0000305" key="12"/>
<evidence type="ECO:0000305" key="13">
    <source>
    </source>
</evidence>
<evidence type="ECO:0000312" key="14">
    <source>
        <dbReference type="RGD" id="2796"/>
    </source>
</evidence>
<evidence type="ECO:0007744" key="15">
    <source>
        <dbReference type="PDB" id="1BG3"/>
    </source>
</evidence>
<evidence type="ECO:0007744" key="16">
    <source>
    </source>
</evidence>
<evidence type="ECO:0007829" key="17">
    <source>
        <dbReference type="PDB" id="1BG3"/>
    </source>
</evidence>
<protein>
    <recommendedName>
        <fullName evidence="12">Hexokinase-1</fullName>
        <ecNumber evidence="4 6 7">2.7.1.1</ecNumber>
    </recommendedName>
    <alternativeName>
        <fullName evidence="9">Brain form hexokinase</fullName>
    </alternativeName>
    <alternativeName>
        <fullName evidence="10">Hexokinase type I</fullName>
        <shortName evidence="10">HK I</shortName>
    </alternativeName>
    <alternativeName>
        <fullName evidence="11">Hexokinase-A</fullName>
    </alternativeName>
</protein>
<comment type="function">
    <text evidence="2 4 6 7">Catalyzes the phosphorylation of various hexoses, such as D-glucose, D-glucosamine, D-fructose, D-mannose and 2-deoxy-D-glucose, to hexose 6-phosphate (D-glucose 6-phosphate, D-glucosamine 6-phosphate, D-fructose 6-phosphate, D-mannose 6-phosphate and 2-deoxy-D-glucose 6-phosphate, respectively) (PubMed:13211595, PubMed:3579310, PubMed:5871820). Mediates the initial step of glycolysis by catalyzing phosphorylation of D-glucose to D-glucose 6-phosphate (PubMed:13211595, PubMed:5871820). Involved in innate immunity and inflammation by acting as a pattern recognition receptor for bacterial peptidoglycan (By similarity). When released in the cytosol, N-acetyl-D-glucosamine component of bacterial peptidoglycan inhibits the hexokinase activity of HK1 and causes its dissociation from mitochondrial outer membrane, thereby activating the NLRP3 inflammasome (By similarity).</text>
</comment>
<comment type="catalytic activity">
    <reaction evidence="4 6 7">
        <text>a D-hexose + ATP = a D-hexose 6-phosphate + ADP + H(+)</text>
        <dbReference type="Rhea" id="RHEA:22740"/>
        <dbReference type="ChEBI" id="CHEBI:4194"/>
        <dbReference type="ChEBI" id="CHEBI:15378"/>
        <dbReference type="ChEBI" id="CHEBI:30616"/>
        <dbReference type="ChEBI" id="CHEBI:229467"/>
        <dbReference type="ChEBI" id="CHEBI:456216"/>
        <dbReference type="EC" id="2.7.1.1"/>
    </reaction>
    <physiologicalReaction direction="left-to-right" evidence="4 6 7">
        <dbReference type="Rhea" id="RHEA:22741"/>
    </physiologicalReaction>
</comment>
<comment type="catalytic activity">
    <reaction evidence="4 7">
        <text>D-fructose + ATP = D-fructose 6-phosphate + ADP + H(+)</text>
        <dbReference type="Rhea" id="RHEA:16125"/>
        <dbReference type="ChEBI" id="CHEBI:15378"/>
        <dbReference type="ChEBI" id="CHEBI:30616"/>
        <dbReference type="ChEBI" id="CHEBI:37721"/>
        <dbReference type="ChEBI" id="CHEBI:61527"/>
        <dbReference type="ChEBI" id="CHEBI:456216"/>
        <dbReference type="EC" id="2.7.1.1"/>
    </reaction>
    <physiologicalReaction direction="left-to-right" evidence="4 7">
        <dbReference type="Rhea" id="RHEA:16126"/>
    </physiologicalReaction>
</comment>
<comment type="catalytic activity">
    <reaction evidence="4 7">
        <text>D-glucose + ATP = D-glucose 6-phosphate + ADP + H(+)</text>
        <dbReference type="Rhea" id="RHEA:17825"/>
        <dbReference type="ChEBI" id="CHEBI:4167"/>
        <dbReference type="ChEBI" id="CHEBI:15378"/>
        <dbReference type="ChEBI" id="CHEBI:30616"/>
        <dbReference type="ChEBI" id="CHEBI:61548"/>
        <dbReference type="ChEBI" id="CHEBI:456216"/>
        <dbReference type="EC" id="2.7.1.1"/>
    </reaction>
    <physiologicalReaction direction="left-to-right" evidence="7">
        <dbReference type="Rhea" id="RHEA:17826"/>
    </physiologicalReaction>
</comment>
<comment type="catalytic activity">
    <reaction evidence="4">
        <text>D-mannose + ATP = D-mannose 6-phosphate + ADP + H(+)</text>
        <dbReference type="Rhea" id="RHEA:11028"/>
        <dbReference type="ChEBI" id="CHEBI:4208"/>
        <dbReference type="ChEBI" id="CHEBI:15378"/>
        <dbReference type="ChEBI" id="CHEBI:30616"/>
        <dbReference type="ChEBI" id="CHEBI:58735"/>
        <dbReference type="ChEBI" id="CHEBI:456216"/>
        <dbReference type="EC" id="2.7.1.1"/>
    </reaction>
    <physiologicalReaction direction="left-to-right" evidence="4">
        <dbReference type="Rhea" id="RHEA:11029"/>
    </physiologicalReaction>
</comment>
<comment type="catalytic activity">
    <reaction evidence="2">
        <text>D-glucosamine + ATP = D-glucosamine 6-phosphate + ADP + H(+)</text>
        <dbReference type="Rhea" id="RHEA:10948"/>
        <dbReference type="ChEBI" id="CHEBI:15378"/>
        <dbReference type="ChEBI" id="CHEBI:30616"/>
        <dbReference type="ChEBI" id="CHEBI:58723"/>
        <dbReference type="ChEBI" id="CHEBI:58725"/>
        <dbReference type="ChEBI" id="CHEBI:456216"/>
        <dbReference type="EC" id="2.7.1.1"/>
    </reaction>
    <physiologicalReaction direction="left-to-right" evidence="2">
        <dbReference type="Rhea" id="RHEA:10949"/>
    </physiologicalReaction>
</comment>
<comment type="activity regulation">
    <text evidence="2">Hexokinase is an allosteric enzyme inhibited by its product D-glucose 6-phosphate. Hexokinase activity is inhibited by N-acetyl-D-glucosamine.</text>
</comment>
<comment type="biophysicochemical properties">
    <kinetics>
        <KM evidence="7">44 uM for D-glucose</KM>
        <KM evidence="7">3.1 mM for D-fructose</KM>
        <KM evidence="7">0.42 mM for ATP</KM>
    </kinetics>
</comment>
<comment type="pathway">
    <text evidence="13">Carbohydrate metabolism; hexose metabolism.</text>
</comment>
<comment type="pathway">
    <text evidence="13">Carbohydrate degradation; glycolysis; D-glyceraldehyde 3-phosphate and glycerone phosphate from D-glucose: step 1/4.</text>
</comment>
<comment type="subunit">
    <text evidence="1 2">Monomer (By similarity). Interacts with RABL2/RABL2A; binds preferentially to GTP-bound RABL2 (By similarity). Interacts with VDAC1. The HK1-VDAC1 complex interacts with ATF2 (By similarity). Interacts (via N-terminal spermatogenic cell-specific region) with PFKM (via C-terminus) (By similarity). Interacts with SMAD5 (By similarity).</text>
</comment>
<comment type="subcellular location">
    <subcellularLocation>
        <location evidence="2">Mitochondrion outer membrane</location>
        <topology evidence="2">Peripheral membrane protein</topology>
    </subcellularLocation>
    <subcellularLocation>
        <location evidence="2">Cytoplasm</location>
        <location evidence="2">Cytosol</location>
    </subcellularLocation>
    <text evidence="2">The mitochondrial-binding peptide (MBP) region promotes association with the mitochondrial outer membrane. Dissociates from the mitochondrial outer membrane following inhibition by N-acetyl-D-glucosamine, leading to relocation to the cytosol.</text>
</comment>
<comment type="tissue specificity">
    <text evidence="5">Expressed in flagella of epididymal sperm.</text>
</comment>
<comment type="domain">
    <text evidence="2">The N- and C-terminal halves of this hexokinase contain a hexokinase domain. The catalytic activity is associated with the C-terminus while regulatory function is associated with the N-terminus. Each domain can bind a single D-glucose and D-glucose 6-phosphate molecule.</text>
</comment>
<comment type="similarity">
    <text evidence="3 12">Belongs to the hexokinase family.</text>
</comment>
<dbReference type="EC" id="2.7.1.1" evidence="4 6 7"/>
<dbReference type="EMBL" id="J04526">
    <property type="protein sequence ID" value="AAC20075.1"/>
    <property type="molecule type" value="mRNA"/>
</dbReference>
<dbReference type="EMBL" id="U27319">
    <property type="protein sequence ID" value="AAC52945.1"/>
    <property type="molecule type" value="Genomic_DNA"/>
</dbReference>
<dbReference type="EMBL" id="U89160">
    <property type="protein sequence ID" value="AAB71376.1"/>
    <property type="molecule type" value="Genomic_DNA"/>
</dbReference>
<dbReference type="EMBL" id="U89158">
    <property type="protein sequence ID" value="AAB71374.1"/>
    <property type="molecule type" value="Genomic_DNA"/>
</dbReference>
<dbReference type="PIR" id="A32521">
    <property type="entry name" value="A32521"/>
</dbReference>
<dbReference type="PIR" id="B32521">
    <property type="entry name" value="B32521"/>
</dbReference>
<dbReference type="PIR" id="C32521">
    <property type="entry name" value="C32521"/>
</dbReference>
<dbReference type="PIR" id="C59226">
    <property type="entry name" value="C59226"/>
</dbReference>
<dbReference type="RefSeq" id="NP_036866.1">
    <property type="nucleotide sequence ID" value="NM_012734.1"/>
</dbReference>
<dbReference type="PDB" id="1BG3">
    <property type="method" value="X-ray"/>
    <property type="resolution" value="2.80 A"/>
    <property type="chains" value="A/B=1-918"/>
</dbReference>
<dbReference type="PDBsum" id="1BG3"/>
<dbReference type="SMR" id="P05708"/>
<dbReference type="BioGRID" id="247135">
    <property type="interactions" value="6"/>
</dbReference>
<dbReference type="FunCoup" id="P05708">
    <property type="interactions" value="778"/>
</dbReference>
<dbReference type="IntAct" id="P05708">
    <property type="interactions" value="4"/>
</dbReference>
<dbReference type="MINT" id="P05708"/>
<dbReference type="STRING" id="10116.ENSRNOP00000066611"/>
<dbReference type="ChEMBL" id="CHEMBL4783"/>
<dbReference type="GlyGen" id="P05708">
    <property type="glycosylation" value="1 site, 1 O-linked glycan (1 site)"/>
</dbReference>
<dbReference type="iPTMnet" id="P05708"/>
<dbReference type="PhosphoSitePlus" id="P05708"/>
<dbReference type="jPOST" id="P05708"/>
<dbReference type="DNASU" id="25058"/>
<dbReference type="GeneID" id="25058"/>
<dbReference type="KEGG" id="rno:25058"/>
<dbReference type="AGR" id="RGD:2796"/>
<dbReference type="CTD" id="3098"/>
<dbReference type="RGD" id="2796">
    <property type="gene designation" value="Hk1"/>
</dbReference>
<dbReference type="InParanoid" id="P05708"/>
<dbReference type="PhylomeDB" id="P05708"/>
<dbReference type="BRENDA" id="2.7.1.1">
    <property type="organism ID" value="5301"/>
</dbReference>
<dbReference type="Reactome" id="R-RNO-446205">
    <property type="pathway name" value="Synthesis of GDP-mannose"/>
</dbReference>
<dbReference type="Reactome" id="R-RNO-70171">
    <property type="pathway name" value="Glycolysis"/>
</dbReference>
<dbReference type="SABIO-RK" id="P05708"/>
<dbReference type="UniPathway" id="UPA00109">
    <property type="reaction ID" value="UER00180"/>
</dbReference>
<dbReference type="UniPathway" id="UPA00242"/>
<dbReference type="EvolutionaryTrace" id="P05708"/>
<dbReference type="PRO" id="PR:P05708"/>
<dbReference type="Proteomes" id="UP000002494">
    <property type="component" value="Unplaced"/>
</dbReference>
<dbReference type="GO" id="GO:0005901">
    <property type="term" value="C:caveola"/>
    <property type="evidence" value="ECO:0000314"/>
    <property type="project" value="RGD"/>
</dbReference>
<dbReference type="GO" id="GO:0005829">
    <property type="term" value="C:cytosol"/>
    <property type="evidence" value="ECO:0000266"/>
    <property type="project" value="RGD"/>
</dbReference>
<dbReference type="GO" id="GO:0045121">
    <property type="term" value="C:membrane raft"/>
    <property type="evidence" value="ECO:0000266"/>
    <property type="project" value="RGD"/>
</dbReference>
<dbReference type="GO" id="GO:0005741">
    <property type="term" value="C:mitochondrial outer membrane"/>
    <property type="evidence" value="ECO:0007669"/>
    <property type="project" value="UniProtKB-SubCell"/>
</dbReference>
<dbReference type="GO" id="GO:0005739">
    <property type="term" value="C:mitochondrion"/>
    <property type="evidence" value="ECO:0000314"/>
    <property type="project" value="CACAO"/>
</dbReference>
<dbReference type="GO" id="GO:0032991">
    <property type="term" value="C:protein-containing complex"/>
    <property type="evidence" value="ECO:0000314"/>
    <property type="project" value="RGD"/>
</dbReference>
<dbReference type="GO" id="GO:0005524">
    <property type="term" value="F:ATP binding"/>
    <property type="evidence" value="ECO:0000314"/>
    <property type="project" value="RGD"/>
</dbReference>
<dbReference type="GO" id="GO:0016887">
    <property type="term" value="F:ATP hydrolysis activity"/>
    <property type="evidence" value="ECO:0000305"/>
    <property type="project" value="RGD"/>
</dbReference>
<dbReference type="GO" id="GO:0005536">
    <property type="term" value="F:D-glucose binding"/>
    <property type="evidence" value="ECO:0000314"/>
    <property type="project" value="RGD"/>
</dbReference>
<dbReference type="GO" id="GO:0008865">
    <property type="term" value="F:fructokinase activity"/>
    <property type="evidence" value="ECO:0000314"/>
    <property type="project" value="UniProtKB"/>
</dbReference>
<dbReference type="GO" id="GO:0004340">
    <property type="term" value="F:glucokinase activity"/>
    <property type="evidence" value="ECO:0000314"/>
    <property type="project" value="UniProtKB"/>
</dbReference>
<dbReference type="GO" id="GO:0047931">
    <property type="term" value="F:glucosamine kinase activity"/>
    <property type="evidence" value="ECO:0007669"/>
    <property type="project" value="RHEA"/>
</dbReference>
<dbReference type="GO" id="GO:0004396">
    <property type="term" value="F:hexokinase activity"/>
    <property type="evidence" value="ECO:0000314"/>
    <property type="project" value="CACAO"/>
</dbReference>
<dbReference type="GO" id="GO:0042802">
    <property type="term" value="F:identical protein binding"/>
    <property type="evidence" value="ECO:0000353"/>
    <property type="project" value="RGD"/>
</dbReference>
<dbReference type="GO" id="GO:0019158">
    <property type="term" value="F:mannokinase activity"/>
    <property type="evidence" value="ECO:0000314"/>
    <property type="project" value="UniProtKB"/>
</dbReference>
<dbReference type="GO" id="GO:0042834">
    <property type="term" value="F:peptidoglycan binding"/>
    <property type="evidence" value="ECO:0000266"/>
    <property type="project" value="RGD"/>
</dbReference>
<dbReference type="GO" id="GO:0004672">
    <property type="term" value="F:protein kinase activity"/>
    <property type="evidence" value="ECO:0000314"/>
    <property type="project" value="RGD"/>
</dbReference>
<dbReference type="GO" id="GO:0044877">
    <property type="term" value="F:protein-containing complex binding"/>
    <property type="evidence" value="ECO:0000314"/>
    <property type="project" value="RGD"/>
</dbReference>
<dbReference type="GO" id="GO:0061621">
    <property type="term" value="P:canonical glycolysis"/>
    <property type="evidence" value="ECO:0000266"/>
    <property type="project" value="RGD"/>
</dbReference>
<dbReference type="GO" id="GO:0046835">
    <property type="term" value="P:carbohydrate phosphorylation"/>
    <property type="evidence" value="ECO:0000314"/>
    <property type="project" value="RGD"/>
</dbReference>
<dbReference type="GO" id="GO:0072655">
    <property type="term" value="P:establishment of protein localization to mitochondrion"/>
    <property type="evidence" value="ECO:0000266"/>
    <property type="project" value="RGD"/>
</dbReference>
<dbReference type="GO" id="GO:0006002">
    <property type="term" value="P:fructose 6-phosphate metabolic process"/>
    <property type="evidence" value="ECO:0000314"/>
    <property type="project" value="UniProtKB"/>
</dbReference>
<dbReference type="GO" id="GO:0061728">
    <property type="term" value="P:GDP-mannose biosynthetic process from mannose"/>
    <property type="evidence" value="ECO:0000266"/>
    <property type="project" value="RGD"/>
</dbReference>
<dbReference type="GO" id="GO:0051156">
    <property type="term" value="P:glucose 6-phosphate metabolic process"/>
    <property type="evidence" value="ECO:0000314"/>
    <property type="project" value="UniProtKB"/>
</dbReference>
<dbReference type="GO" id="GO:0006006">
    <property type="term" value="P:glucose metabolic process"/>
    <property type="evidence" value="ECO:0000318"/>
    <property type="project" value="GO_Central"/>
</dbReference>
<dbReference type="GO" id="GO:0006096">
    <property type="term" value="P:glycolytic process"/>
    <property type="evidence" value="ECO:0000314"/>
    <property type="project" value="RGD"/>
</dbReference>
<dbReference type="GO" id="GO:0006954">
    <property type="term" value="P:inflammatory response"/>
    <property type="evidence" value="ECO:0007669"/>
    <property type="project" value="UniProtKB-KW"/>
</dbReference>
<dbReference type="GO" id="GO:0045087">
    <property type="term" value="P:innate immune response"/>
    <property type="evidence" value="ECO:0007669"/>
    <property type="project" value="UniProtKB-KW"/>
</dbReference>
<dbReference type="GO" id="GO:0001678">
    <property type="term" value="P:intracellular glucose homeostasis"/>
    <property type="evidence" value="ECO:0000318"/>
    <property type="project" value="GO_Central"/>
</dbReference>
<dbReference type="GO" id="GO:0072656">
    <property type="term" value="P:maintenance of protein location in mitochondrion"/>
    <property type="evidence" value="ECO:0000266"/>
    <property type="project" value="RGD"/>
</dbReference>
<dbReference type="GO" id="GO:0006013">
    <property type="term" value="P:mannose metabolic process"/>
    <property type="evidence" value="ECO:0000314"/>
    <property type="project" value="UniProtKB"/>
</dbReference>
<dbReference type="GO" id="GO:0043066">
    <property type="term" value="P:negative regulation of apoptotic process"/>
    <property type="evidence" value="ECO:0000315"/>
    <property type="project" value="RGD"/>
</dbReference>
<dbReference type="GO" id="GO:0002720">
    <property type="term" value="P:positive regulation of cytokine production involved in immune response"/>
    <property type="evidence" value="ECO:0000266"/>
    <property type="project" value="RGD"/>
</dbReference>
<dbReference type="GO" id="GO:0032731">
    <property type="term" value="P:positive regulation of interleukin-1 beta production"/>
    <property type="evidence" value="ECO:0000266"/>
    <property type="project" value="RGD"/>
</dbReference>
<dbReference type="GO" id="GO:0009741">
    <property type="term" value="P:response to brassinosteroid"/>
    <property type="evidence" value="ECO:0000270"/>
    <property type="project" value="RGD"/>
</dbReference>
<dbReference type="GO" id="GO:0001666">
    <property type="term" value="P:response to hypoxia"/>
    <property type="evidence" value="ECO:0000270"/>
    <property type="project" value="RGD"/>
</dbReference>
<dbReference type="GO" id="GO:0002931">
    <property type="term" value="P:response to ischemia"/>
    <property type="evidence" value="ECO:0000314"/>
    <property type="project" value="RGD"/>
</dbReference>
<dbReference type="GO" id="GO:1901986">
    <property type="term" value="P:response to ketamine"/>
    <property type="evidence" value="ECO:0000270"/>
    <property type="project" value="RGD"/>
</dbReference>
<dbReference type="CDD" id="cd24127">
    <property type="entry name" value="ASKHA_NBD_HK1_meta_rpt2"/>
    <property type="match status" value="1"/>
</dbReference>
<dbReference type="FunFam" id="3.30.420.40:FF:000015">
    <property type="entry name" value="Hexokinase 1"/>
    <property type="match status" value="2"/>
</dbReference>
<dbReference type="FunFam" id="3.40.367.20:FF:000001">
    <property type="entry name" value="Hexokinase 1"/>
    <property type="match status" value="1"/>
</dbReference>
<dbReference type="FunFam" id="3.40.367.20:FF:000020">
    <property type="entry name" value="Hexokinase-1"/>
    <property type="match status" value="1"/>
</dbReference>
<dbReference type="Gene3D" id="3.30.420.40">
    <property type="match status" value="2"/>
</dbReference>
<dbReference type="Gene3D" id="3.40.367.20">
    <property type="match status" value="2"/>
</dbReference>
<dbReference type="InterPro" id="IPR043129">
    <property type="entry name" value="ATPase_NBD"/>
</dbReference>
<dbReference type="InterPro" id="IPR001312">
    <property type="entry name" value="Hexokinase"/>
</dbReference>
<dbReference type="InterPro" id="IPR019807">
    <property type="entry name" value="Hexokinase_BS"/>
</dbReference>
<dbReference type="InterPro" id="IPR022673">
    <property type="entry name" value="Hexokinase_C"/>
</dbReference>
<dbReference type="InterPro" id="IPR022672">
    <property type="entry name" value="Hexokinase_N"/>
</dbReference>
<dbReference type="PANTHER" id="PTHR19443">
    <property type="entry name" value="HEXOKINASE"/>
    <property type="match status" value="1"/>
</dbReference>
<dbReference type="PANTHER" id="PTHR19443:SF80">
    <property type="entry name" value="HEXOKINASE-1"/>
    <property type="match status" value="1"/>
</dbReference>
<dbReference type="Pfam" id="PF00349">
    <property type="entry name" value="Hexokinase_1"/>
    <property type="match status" value="2"/>
</dbReference>
<dbReference type="Pfam" id="PF03727">
    <property type="entry name" value="Hexokinase_2"/>
    <property type="match status" value="2"/>
</dbReference>
<dbReference type="PRINTS" id="PR00475">
    <property type="entry name" value="HEXOKINASE"/>
</dbReference>
<dbReference type="SUPFAM" id="SSF53067">
    <property type="entry name" value="Actin-like ATPase domain"/>
    <property type="match status" value="4"/>
</dbReference>
<dbReference type="PROSITE" id="PS00378">
    <property type="entry name" value="HEXOKINASE_1"/>
    <property type="match status" value="2"/>
</dbReference>
<dbReference type="PROSITE" id="PS51748">
    <property type="entry name" value="HEXOKINASE_2"/>
    <property type="match status" value="2"/>
</dbReference>
<sequence>MIAAQLLAYYFTELKDDQVKKIDKYLYAMRLSDEILIDILTRFKKEMKNGLSRDYNPTASVKMLPTFVRSIPDGSEKGDFIALDLGGSSFRILRVQVNHEKNQNVSMESEIYDTPENIVHGSGTQLFDHVADCLGDFMEKKKIKDKKLPVGFTFSFPCRQSKIDEAVLITWTKRFKASGVEGADVVKLLNKAIKKRGDYDANIVAVVNDTVGTMMTCGYDDQQCEVGLIIGTGTNACYMEELRHIDLVEGDEGRMCINTEWGAFGDDGSLEDIRTEFDRELDRGSLNPGKQLFEKMVSGMYMGELVRLILVKMAKEGLLFEGRITPELLTRGKFNTSDVSAIEKDKEGIQNAKEILTRLGVEPSDVDCVSVQHICTIVSFRSANLVAATLGAILNRLRDNKGTPRLRTTVGVDGSLYKMHPQYSRRFHKTLRRLVPDSDVRFLLSESGTGKGAAMVTAVAYRLAEQHRQIEETLAHFRLSKQTLMEVKKRLRTEMEMGLRKETNSKATVKMLPSFVRSIPDGTEHGDFLALDLGGTNFRVLLVKIRSGKKRTVEMHNKIYSIPLEIMQGTGDELFDHIVSCISDFLDYMGIKGPRMPLGFTFSFPCHQTNLDCGILISWTKGFKATDCEGHDVASLLRDAVKRREEFDLDVVAVVNDTVGTMMTCAYEEPTCEIGLIVGTGTNACYMEEMKNVEMVEGNQGQMCINMEWGAFGDNGCLDDIRTDFDKVVDEYSLNSGKQRFEKMISGMYLGEIVRNILIDFTKKGFLFRGQISEPLKTRGIFETKFLSQIESDRLALLQVRAILQQLGLNSTCDDSILVKTVCGVVSKRAAQLCGAGMAAVVEKIRENRGLDHLNVTVGVDGTLYKLHPHFSRIMHQTVKELSPKCTVSFLLSEDGSGKGAALITAVGVRLRGDPSIA</sequence>
<keyword id="KW-0002">3D-structure</keyword>
<keyword id="KW-0007">Acetylation</keyword>
<keyword id="KW-0021">Allosteric enzyme</keyword>
<keyword id="KW-0067">ATP-binding</keyword>
<keyword id="KW-0963">Cytoplasm</keyword>
<keyword id="KW-0903">Direct protein sequencing</keyword>
<keyword id="KW-0324">Glycolysis</keyword>
<keyword id="KW-0391">Immunity</keyword>
<keyword id="KW-0395">Inflammatory response</keyword>
<keyword id="KW-0399">Innate immunity</keyword>
<keyword id="KW-0418">Kinase</keyword>
<keyword id="KW-0472">Membrane</keyword>
<keyword id="KW-0496">Mitochondrion</keyword>
<keyword id="KW-1000">Mitochondrion outer membrane</keyword>
<keyword id="KW-0547">Nucleotide-binding</keyword>
<keyword id="KW-0597">Phosphoprotein</keyword>
<keyword id="KW-1185">Reference proteome</keyword>
<keyword id="KW-0677">Repeat</keyword>
<keyword id="KW-0808">Transferase</keyword>
<gene>
    <name evidence="14" type="primary">Hk1</name>
</gene>